<keyword id="KW-0028">Amino-acid biosynthesis</keyword>
<keyword id="KW-0057">Aromatic amino acid biosynthesis</keyword>
<keyword id="KW-0067">ATP-binding</keyword>
<keyword id="KW-0963">Cytoplasm</keyword>
<keyword id="KW-0418">Kinase</keyword>
<keyword id="KW-0460">Magnesium</keyword>
<keyword id="KW-0479">Metal-binding</keyword>
<keyword id="KW-0547">Nucleotide-binding</keyword>
<keyword id="KW-1185">Reference proteome</keyword>
<keyword id="KW-0808">Transferase</keyword>
<protein>
    <recommendedName>
        <fullName evidence="1">Shikimate kinase</fullName>
        <shortName evidence="1">SK</shortName>
        <ecNumber evidence="1">2.7.1.71</ecNumber>
    </recommendedName>
</protein>
<sequence>MSGTNKQTNLHRQTETIRQLLGSKVVVLVGLMGAGKSTIGRKVANMLNLPFKDADTEIETVSRMTVAELFEAYGEVEFRDLERRVILRLLDDGPMVLATGGGAYMNAETRAAIAEAGISIWINADLDVLMERVSRRQNRPLLRNSDPRGVMQRLMDERYPVYALAELHLMTRDEKKEVIAAELIEVLAAHLEKEQAASAG</sequence>
<accession>A9M9B4</accession>
<proteinExistence type="inferred from homology"/>
<reference key="1">
    <citation type="submission" date="2007-10" db="EMBL/GenBank/DDBJ databases">
        <title>Brucella canis ATCC 23365 whole genome shotgun sequencing project.</title>
        <authorList>
            <person name="Setubal J.C."/>
            <person name="Bowns C."/>
            <person name="Boyle S."/>
            <person name="Crasta O.R."/>
            <person name="Czar M.J."/>
            <person name="Dharmanolla C."/>
            <person name="Gillespie J.J."/>
            <person name="Kenyon R.W."/>
            <person name="Lu J."/>
            <person name="Mane S."/>
            <person name="Mohapatra S."/>
            <person name="Nagrani S."/>
            <person name="Purkayastha A."/>
            <person name="Rajasimha H.K."/>
            <person name="Shallom J.M."/>
            <person name="Shallom S."/>
            <person name="Shukla M."/>
            <person name="Snyder E.E."/>
            <person name="Sobral B.W."/>
            <person name="Wattam A.R."/>
            <person name="Will R."/>
            <person name="Williams K."/>
            <person name="Yoo H."/>
            <person name="Bruce D."/>
            <person name="Detter C."/>
            <person name="Munk C."/>
            <person name="Brettin T.S."/>
        </authorList>
    </citation>
    <scope>NUCLEOTIDE SEQUENCE [LARGE SCALE GENOMIC DNA]</scope>
    <source>
        <strain>ATCC 23365 / NCTC 10854 / RM-666</strain>
    </source>
</reference>
<dbReference type="EC" id="2.7.1.71" evidence="1"/>
<dbReference type="EMBL" id="CP000872">
    <property type="protein sequence ID" value="ABX63061.1"/>
    <property type="molecule type" value="Genomic_DNA"/>
</dbReference>
<dbReference type="RefSeq" id="WP_002971869.1">
    <property type="nucleotide sequence ID" value="NC_010103.1"/>
</dbReference>
<dbReference type="SMR" id="A9M9B4"/>
<dbReference type="KEGG" id="bcs:BCAN_A2075"/>
<dbReference type="HOGENOM" id="CLU_057607_2_0_5"/>
<dbReference type="PhylomeDB" id="A9M9B4"/>
<dbReference type="UniPathway" id="UPA00053">
    <property type="reaction ID" value="UER00088"/>
</dbReference>
<dbReference type="Proteomes" id="UP000001385">
    <property type="component" value="Chromosome I"/>
</dbReference>
<dbReference type="GO" id="GO:0005829">
    <property type="term" value="C:cytosol"/>
    <property type="evidence" value="ECO:0007669"/>
    <property type="project" value="TreeGrafter"/>
</dbReference>
<dbReference type="GO" id="GO:0005524">
    <property type="term" value="F:ATP binding"/>
    <property type="evidence" value="ECO:0007669"/>
    <property type="project" value="UniProtKB-UniRule"/>
</dbReference>
<dbReference type="GO" id="GO:0000287">
    <property type="term" value="F:magnesium ion binding"/>
    <property type="evidence" value="ECO:0007669"/>
    <property type="project" value="UniProtKB-UniRule"/>
</dbReference>
<dbReference type="GO" id="GO:0004765">
    <property type="term" value="F:shikimate kinase activity"/>
    <property type="evidence" value="ECO:0007669"/>
    <property type="project" value="UniProtKB-UniRule"/>
</dbReference>
<dbReference type="GO" id="GO:0008652">
    <property type="term" value="P:amino acid biosynthetic process"/>
    <property type="evidence" value="ECO:0007669"/>
    <property type="project" value="UniProtKB-KW"/>
</dbReference>
<dbReference type="GO" id="GO:0009073">
    <property type="term" value="P:aromatic amino acid family biosynthetic process"/>
    <property type="evidence" value="ECO:0007669"/>
    <property type="project" value="UniProtKB-KW"/>
</dbReference>
<dbReference type="GO" id="GO:0009423">
    <property type="term" value="P:chorismate biosynthetic process"/>
    <property type="evidence" value="ECO:0007669"/>
    <property type="project" value="UniProtKB-UniRule"/>
</dbReference>
<dbReference type="CDD" id="cd00464">
    <property type="entry name" value="SK"/>
    <property type="match status" value="1"/>
</dbReference>
<dbReference type="Gene3D" id="3.40.50.300">
    <property type="entry name" value="P-loop containing nucleotide triphosphate hydrolases"/>
    <property type="match status" value="1"/>
</dbReference>
<dbReference type="HAMAP" id="MF_00109">
    <property type="entry name" value="Shikimate_kinase"/>
    <property type="match status" value="1"/>
</dbReference>
<dbReference type="InterPro" id="IPR027417">
    <property type="entry name" value="P-loop_NTPase"/>
</dbReference>
<dbReference type="InterPro" id="IPR031322">
    <property type="entry name" value="Shikimate/glucono_kinase"/>
</dbReference>
<dbReference type="InterPro" id="IPR000623">
    <property type="entry name" value="Shikimate_kinase/TSH1"/>
</dbReference>
<dbReference type="NCBIfam" id="NF010552">
    <property type="entry name" value="PRK13946.1"/>
    <property type="match status" value="1"/>
</dbReference>
<dbReference type="PANTHER" id="PTHR21087">
    <property type="entry name" value="SHIKIMATE KINASE"/>
    <property type="match status" value="1"/>
</dbReference>
<dbReference type="PANTHER" id="PTHR21087:SF16">
    <property type="entry name" value="SHIKIMATE KINASE 1, CHLOROPLASTIC"/>
    <property type="match status" value="1"/>
</dbReference>
<dbReference type="Pfam" id="PF01202">
    <property type="entry name" value="SKI"/>
    <property type="match status" value="1"/>
</dbReference>
<dbReference type="PRINTS" id="PR01100">
    <property type="entry name" value="SHIKIMTKNASE"/>
</dbReference>
<dbReference type="SUPFAM" id="SSF52540">
    <property type="entry name" value="P-loop containing nucleoside triphosphate hydrolases"/>
    <property type="match status" value="1"/>
</dbReference>
<name>AROK_BRUC2</name>
<comment type="function">
    <text evidence="1">Catalyzes the specific phosphorylation of the 3-hydroxyl group of shikimic acid using ATP as a cosubstrate.</text>
</comment>
<comment type="catalytic activity">
    <reaction evidence="1">
        <text>shikimate + ATP = 3-phosphoshikimate + ADP + H(+)</text>
        <dbReference type="Rhea" id="RHEA:13121"/>
        <dbReference type="ChEBI" id="CHEBI:15378"/>
        <dbReference type="ChEBI" id="CHEBI:30616"/>
        <dbReference type="ChEBI" id="CHEBI:36208"/>
        <dbReference type="ChEBI" id="CHEBI:145989"/>
        <dbReference type="ChEBI" id="CHEBI:456216"/>
        <dbReference type="EC" id="2.7.1.71"/>
    </reaction>
</comment>
<comment type="cofactor">
    <cofactor evidence="1">
        <name>Mg(2+)</name>
        <dbReference type="ChEBI" id="CHEBI:18420"/>
    </cofactor>
    <text evidence="1">Binds 1 Mg(2+) ion per subunit.</text>
</comment>
<comment type="pathway">
    <text evidence="1">Metabolic intermediate biosynthesis; chorismate biosynthesis; chorismate from D-erythrose 4-phosphate and phosphoenolpyruvate: step 5/7.</text>
</comment>
<comment type="subunit">
    <text evidence="1">Monomer.</text>
</comment>
<comment type="subcellular location">
    <subcellularLocation>
        <location evidence="1">Cytoplasm</location>
    </subcellularLocation>
</comment>
<comment type="similarity">
    <text evidence="1">Belongs to the shikimate kinase family.</text>
</comment>
<feature type="chain" id="PRO_1000119048" description="Shikimate kinase">
    <location>
        <begin position="1"/>
        <end position="200"/>
    </location>
</feature>
<feature type="binding site" evidence="1">
    <location>
        <begin position="33"/>
        <end position="38"/>
    </location>
    <ligand>
        <name>ATP</name>
        <dbReference type="ChEBI" id="CHEBI:30616"/>
    </ligand>
</feature>
<feature type="binding site" evidence="1">
    <location>
        <position position="37"/>
    </location>
    <ligand>
        <name>Mg(2+)</name>
        <dbReference type="ChEBI" id="CHEBI:18420"/>
    </ligand>
</feature>
<feature type="binding site" evidence="1">
    <location>
        <position position="55"/>
    </location>
    <ligand>
        <name>substrate</name>
    </ligand>
</feature>
<feature type="binding site" evidence="1">
    <location>
        <position position="79"/>
    </location>
    <ligand>
        <name>substrate</name>
    </ligand>
</feature>
<feature type="binding site" evidence="1">
    <location>
        <position position="101"/>
    </location>
    <ligand>
        <name>substrate</name>
    </ligand>
</feature>
<feature type="binding site" evidence="1">
    <location>
        <position position="139"/>
    </location>
    <ligand>
        <name>ATP</name>
        <dbReference type="ChEBI" id="CHEBI:30616"/>
    </ligand>
</feature>
<feature type="binding site" evidence="1">
    <location>
        <position position="158"/>
    </location>
    <ligand>
        <name>substrate</name>
    </ligand>
</feature>
<organism>
    <name type="scientific">Brucella canis (strain ATCC 23365 / NCTC 10854 / RM-666)</name>
    <dbReference type="NCBI Taxonomy" id="483179"/>
    <lineage>
        <taxon>Bacteria</taxon>
        <taxon>Pseudomonadati</taxon>
        <taxon>Pseudomonadota</taxon>
        <taxon>Alphaproteobacteria</taxon>
        <taxon>Hyphomicrobiales</taxon>
        <taxon>Brucellaceae</taxon>
        <taxon>Brucella/Ochrobactrum group</taxon>
        <taxon>Brucella</taxon>
    </lineage>
</organism>
<evidence type="ECO:0000255" key="1">
    <source>
        <dbReference type="HAMAP-Rule" id="MF_00109"/>
    </source>
</evidence>
<gene>
    <name evidence="1" type="primary">aroK</name>
    <name type="ordered locus">BCAN_A2075</name>
</gene>